<name>TSN7_HUMAN</name>
<dbReference type="EMBL" id="D10653">
    <property type="protein sequence ID" value="BAA01501.1"/>
    <property type="status" value="ALT_INIT"/>
    <property type="molecule type" value="mRNA"/>
</dbReference>
<dbReference type="EMBL" id="AK312343">
    <property type="protein sequence ID" value="BAG35264.1"/>
    <property type="molecule type" value="mRNA"/>
</dbReference>
<dbReference type="EMBL" id="CH471141">
    <property type="protein sequence ID" value="EAW59437.1"/>
    <property type="molecule type" value="Genomic_DNA"/>
</dbReference>
<dbReference type="EMBL" id="D29808">
    <property type="protein sequence ID" value="BAA06191.1"/>
    <property type="status" value="ALT_INIT"/>
    <property type="molecule type" value="mRNA"/>
</dbReference>
<dbReference type="EMBL" id="AJ250562">
    <property type="protein sequence ID" value="CAB65594.1"/>
    <property type="molecule type" value="Genomic_DNA"/>
</dbReference>
<dbReference type="EMBL" id="AJ250563">
    <property type="protein sequence ID" value="CAB65594.1"/>
    <property type="status" value="JOINED"/>
    <property type="molecule type" value="Genomic_DNA"/>
</dbReference>
<dbReference type="EMBL" id="AJ250564">
    <property type="protein sequence ID" value="CAB65594.1"/>
    <property type="status" value="JOINED"/>
    <property type="molecule type" value="Genomic_DNA"/>
</dbReference>
<dbReference type="EMBL" id="AJ250565">
    <property type="protein sequence ID" value="CAB65594.1"/>
    <property type="status" value="JOINED"/>
    <property type="molecule type" value="Genomic_DNA"/>
</dbReference>
<dbReference type="EMBL" id="AJ250566">
    <property type="protein sequence ID" value="CAB65594.1"/>
    <property type="status" value="JOINED"/>
    <property type="molecule type" value="Genomic_DNA"/>
</dbReference>
<dbReference type="EMBL" id="AJ250567">
    <property type="protein sequence ID" value="CAB65594.1"/>
    <property type="status" value="JOINED"/>
    <property type="molecule type" value="Genomic_DNA"/>
</dbReference>
<dbReference type="EMBL" id="AJ250568">
    <property type="protein sequence ID" value="CAB65594.1"/>
    <property type="status" value="JOINED"/>
    <property type="molecule type" value="Genomic_DNA"/>
</dbReference>
<dbReference type="EMBL" id="AB062057">
    <property type="protein sequence ID" value="BAB55825.1"/>
    <property type="molecule type" value="mRNA"/>
</dbReference>
<dbReference type="EMBL" id="AB062057">
    <property type="protein sequence ID" value="BAB55824.1"/>
    <property type="molecule type" value="mRNA"/>
</dbReference>
<dbReference type="EMBL" id="CH471141">
    <property type="protein sequence ID" value="EAW59438.1"/>
    <property type="molecule type" value="Genomic_DNA"/>
</dbReference>
<dbReference type="EMBL" id="BC018036">
    <property type="protein sequence ID" value="AAH18036.1"/>
    <property type="molecule type" value="mRNA"/>
</dbReference>
<dbReference type="CCDS" id="CCDS14248.1"/>
<dbReference type="PIR" id="I39368">
    <property type="entry name" value="I39368"/>
</dbReference>
<dbReference type="RefSeq" id="NP_004606.2">
    <property type="nucleotide sequence ID" value="NM_004615.3"/>
</dbReference>
<dbReference type="SMR" id="P41732"/>
<dbReference type="BioGRID" id="112957">
    <property type="interactions" value="30"/>
</dbReference>
<dbReference type="FunCoup" id="P41732">
    <property type="interactions" value="473"/>
</dbReference>
<dbReference type="IntAct" id="P41732">
    <property type="interactions" value="22"/>
</dbReference>
<dbReference type="MINT" id="P41732"/>
<dbReference type="STRING" id="9606.ENSP00000367743"/>
<dbReference type="TCDB" id="8.A.40.1.2">
    <property type="family name" value="the tetraspanin (tetraspanin) family"/>
</dbReference>
<dbReference type="GlyCosmos" id="P41732">
    <property type="glycosylation" value="5 sites, No reported glycans"/>
</dbReference>
<dbReference type="GlyGen" id="P41732">
    <property type="glycosylation" value="5 sites"/>
</dbReference>
<dbReference type="iPTMnet" id="P41732"/>
<dbReference type="PhosphoSitePlus" id="P41732"/>
<dbReference type="SwissPalm" id="P41732"/>
<dbReference type="BioMuta" id="TSPAN7"/>
<dbReference type="DMDM" id="17380550"/>
<dbReference type="jPOST" id="P41732"/>
<dbReference type="MassIVE" id="P41732"/>
<dbReference type="PaxDb" id="9606-ENSP00000367743"/>
<dbReference type="PeptideAtlas" id="P41732"/>
<dbReference type="ProteomicsDB" id="55476"/>
<dbReference type="Pumba" id="P41732"/>
<dbReference type="Antibodypedia" id="530">
    <property type="antibodies" value="299 antibodies from 28 providers"/>
</dbReference>
<dbReference type="DNASU" id="7102"/>
<dbReference type="Ensembl" id="ENST00000378482.7">
    <property type="protein sequence ID" value="ENSP00000367743.2"/>
    <property type="gene ID" value="ENSG00000156298.13"/>
</dbReference>
<dbReference type="GeneID" id="7102"/>
<dbReference type="KEGG" id="hsa:7102"/>
<dbReference type="MANE-Select" id="ENST00000378482.7">
    <property type="protein sequence ID" value="ENSP00000367743.2"/>
    <property type="RefSeq nucleotide sequence ID" value="NM_004615.4"/>
    <property type="RefSeq protein sequence ID" value="NP_004606.2"/>
</dbReference>
<dbReference type="UCSC" id="uc004deg.5">
    <property type="organism name" value="human"/>
</dbReference>
<dbReference type="AGR" id="HGNC:11854"/>
<dbReference type="CTD" id="7102"/>
<dbReference type="DisGeNET" id="7102"/>
<dbReference type="GeneCards" id="TSPAN7"/>
<dbReference type="HGNC" id="HGNC:11854">
    <property type="gene designation" value="TSPAN7"/>
</dbReference>
<dbReference type="HPA" id="ENSG00000156298">
    <property type="expression patterns" value="Tissue enhanced (brain)"/>
</dbReference>
<dbReference type="MalaCards" id="TSPAN7"/>
<dbReference type="MIM" id="300096">
    <property type="type" value="gene"/>
</dbReference>
<dbReference type="MIM" id="300210">
    <property type="type" value="phenotype"/>
</dbReference>
<dbReference type="neXtProt" id="NX_P41732"/>
<dbReference type="OpenTargets" id="ENSG00000156298"/>
<dbReference type="Orphanet" id="777">
    <property type="disease" value="X-linked non-syndromic intellectual disability"/>
</dbReference>
<dbReference type="PharmGKB" id="PA36555"/>
<dbReference type="VEuPathDB" id="HostDB:ENSG00000156298"/>
<dbReference type="eggNOG" id="KOG3882">
    <property type="taxonomic scope" value="Eukaryota"/>
</dbReference>
<dbReference type="GeneTree" id="ENSGT00940000156153"/>
<dbReference type="HOGENOM" id="CLU_055524_3_0_1"/>
<dbReference type="InParanoid" id="P41732"/>
<dbReference type="OMA" id="VYRQGCY"/>
<dbReference type="OrthoDB" id="9972904at2759"/>
<dbReference type="PAN-GO" id="P41732">
    <property type="GO annotations" value="1 GO annotation based on evolutionary models"/>
</dbReference>
<dbReference type="PhylomeDB" id="P41732"/>
<dbReference type="TreeFam" id="TF352891"/>
<dbReference type="PathwayCommons" id="P41732"/>
<dbReference type="Reactome" id="R-HSA-202733">
    <property type="pathway name" value="Cell surface interactions at the vascular wall"/>
</dbReference>
<dbReference type="Reactome" id="R-HSA-416993">
    <property type="pathway name" value="Trafficking of GluR2-containing AMPA receptors"/>
</dbReference>
<dbReference type="SignaLink" id="P41732"/>
<dbReference type="SIGNOR" id="P41732"/>
<dbReference type="BioGRID-ORCS" id="7102">
    <property type="hits" value="10 hits in 772 CRISPR screens"/>
</dbReference>
<dbReference type="ChiTaRS" id="TSPAN7">
    <property type="organism name" value="human"/>
</dbReference>
<dbReference type="GeneWiki" id="TSPAN7"/>
<dbReference type="GenomeRNAi" id="7102"/>
<dbReference type="Pharos" id="P41732">
    <property type="development level" value="Tbio"/>
</dbReference>
<dbReference type="PRO" id="PR:P41732"/>
<dbReference type="Proteomes" id="UP000005640">
    <property type="component" value="Chromosome X"/>
</dbReference>
<dbReference type="RNAct" id="P41732">
    <property type="molecule type" value="protein"/>
</dbReference>
<dbReference type="Bgee" id="ENSG00000156298">
    <property type="expression patterns" value="Expressed in caudate nucleus and 198 other cell types or tissues"/>
</dbReference>
<dbReference type="ExpressionAtlas" id="P41732">
    <property type="expression patterns" value="baseline and differential"/>
</dbReference>
<dbReference type="GO" id="GO:0005886">
    <property type="term" value="C:plasma membrane"/>
    <property type="evidence" value="ECO:0000318"/>
    <property type="project" value="GO_Central"/>
</dbReference>
<dbReference type="CDD" id="cd03161">
    <property type="entry name" value="TM4SF2_6_like_LEL"/>
    <property type="match status" value="1"/>
</dbReference>
<dbReference type="FunFam" id="1.10.1450.10:FF:000003">
    <property type="entry name" value="Tetraspanin"/>
    <property type="match status" value="1"/>
</dbReference>
<dbReference type="Gene3D" id="1.10.1450.10">
    <property type="entry name" value="Tetraspanin"/>
    <property type="match status" value="1"/>
</dbReference>
<dbReference type="InterPro" id="IPR018499">
    <property type="entry name" value="Tetraspanin/Peripherin"/>
</dbReference>
<dbReference type="InterPro" id="IPR000301">
    <property type="entry name" value="Tetraspanin_animals"/>
</dbReference>
<dbReference type="InterPro" id="IPR018503">
    <property type="entry name" value="Tetraspanin_CS"/>
</dbReference>
<dbReference type="InterPro" id="IPR008952">
    <property type="entry name" value="Tetraspanin_EC2_sf"/>
</dbReference>
<dbReference type="InterPro" id="IPR048232">
    <property type="entry name" value="TSN6/7_LEL"/>
</dbReference>
<dbReference type="PANTHER" id="PTHR19282">
    <property type="entry name" value="TETRASPANIN"/>
    <property type="match status" value="1"/>
</dbReference>
<dbReference type="PANTHER" id="PTHR19282:SF257">
    <property type="entry name" value="TETRASPANIN-7"/>
    <property type="match status" value="1"/>
</dbReference>
<dbReference type="Pfam" id="PF00335">
    <property type="entry name" value="Tetraspanin"/>
    <property type="match status" value="1"/>
</dbReference>
<dbReference type="PIRSF" id="PIRSF002419">
    <property type="entry name" value="Tetraspanin"/>
    <property type="match status" value="1"/>
</dbReference>
<dbReference type="PRINTS" id="PR00259">
    <property type="entry name" value="TMFOUR"/>
</dbReference>
<dbReference type="SUPFAM" id="SSF48652">
    <property type="entry name" value="Tetraspanin"/>
    <property type="match status" value="1"/>
</dbReference>
<dbReference type="PROSITE" id="PS00421">
    <property type="entry name" value="TM4_1"/>
    <property type="match status" value="1"/>
</dbReference>
<feature type="chain" id="PRO_0000219248" description="Tetraspanin-7">
    <location>
        <begin position="1"/>
        <end position="249"/>
    </location>
</feature>
<feature type="topological domain" description="Cytoplasmic" evidence="1">
    <location>
        <begin position="1"/>
        <end position="16"/>
    </location>
</feature>
<feature type="transmembrane region" description="Helical" evidence="1">
    <location>
        <begin position="17"/>
        <end position="40"/>
    </location>
</feature>
<feature type="topological domain" description="Extracellular" evidence="1">
    <location>
        <begin position="41"/>
        <end position="56"/>
    </location>
</feature>
<feature type="transmembrane region" description="Helical" evidence="1">
    <location>
        <begin position="57"/>
        <end position="75"/>
    </location>
</feature>
<feature type="topological domain" description="Cytoplasmic" evidence="1">
    <location>
        <begin position="76"/>
        <end position="86"/>
    </location>
</feature>
<feature type="transmembrane region" description="Helical" evidence="1">
    <location>
        <begin position="87"/>
        <end position="112"/>
    </location>
</feature>
<feature type="topological domain" description="Extracellular" evidence="1">
    <location>
        <begin position="113"/>
        <end position="213"/>
    </location>
</feature>
<feature type="transmembrane region" description="Helical" evidence="1">
    <location>
        <begin position="214"/>
        <end position="234"/>
    </location>
</feature>
<feature type="topological domain" description="Cytoplasmic" evidence="1">
    <location>
        <begin position="235"/>
        <end position="249"/>
    </location>
</feature>
<feature type="glycosylation site" description="N-linked (GlcNAc...) asparagine" evidence="1">
    <location>
        <position position="54"/>
    </location>
</feature>
<feature type="glycosylation site" description="N-linked (GlcNAc...) asparagine" evidence="1">
    <location>
        <position position="155"/>
    </location>
</feature>
<feature type="glycosylation site" description="N-linked (GlcNAc...) asparagine" evidence="1">
    <location>
        <position position="158"/>
    </location>
</feature>
<feature type="glycosylation site" description="N-linked (GlcNAc...) asparagine" evidence="1">
    <location>
        <position position="177"/>
    </location>
</feature>
<feature type="glycosylation site" description="N-linked (GlcNAc...) asparagine" evidence="1">
    <location>
        <position position="188"/>
    </location>
</feature>
<feature type="sequence variant" id="VAR_037905" description="In dbSNP:rs17851592." evidence="3">
    <original>E</original>
    <variation>K</variation>
    <location>
        <position position="53"/>
    </location>
</feature>
<feature type="sequence variant" id="VAR_037906" description="In dbSNP:rs17851593." evidence="3">
    <original>A</original>
    <variation>T</variation>
    <location>
        <position position="127"/>
    </location>
</feature>
<feature type="sequence variant" id="VAR_009259" description="In XLID58; dbSNP:rs104894951." evidence="2">
    <original>P</original>
    <variation>H</variation>
    <location>
        <position position="172"/>
    </location>
</feature>
<feature type="sequence conflict" description="In Ref. 5; CAB65594." evidence="5" ref="5">
    <original>E</original>
    <variation>K</variation>
    <location>
        <position position="136"/>
    </location>
</feature>
<evidence type="ECO:0000255" key="1"/>
<evidence type="ECO:0000269" key="2">
    <source>
    </source>
</evidence>
<evidence type="ECO:0000269" key="3">
    <source>
    </source>
</evidence>
<evidence type="ECO:0000269" key="4">
    <source>
    </source>
</evidence>
<evidence type="ECO:0000305" key="5"/>
<protein>
    <recommendedName>
        <fullName>Tetraspanin-7</fullName>
        <shortName>Tspan-7</shortName>
    </recommendedName>
    <alternativeName>
        <fullName>Cell surface glycoprotein A15</fullName>
    </alternativeName>
    <alternativeName>
        <fullName>Membrane component chromosome X surface marker 1</fullName>
    </alternativeName>
    <alternativeName>
        <fullName>T-cell acute lymphoblastic leukemia-associated antigen 1</fullName>
        <shortName>TALLA-1</shortName>
    </alternativeName>
    <alternativeName>
        <fullName>Transmembrane 4 superfamily member 2</fullName>
    </alternativeName>
    <cdAntigenName>CD231</cdAntigenName>
</protein>
<proteinExistence type="evidence at protein level"/>
<accession>P41732</accession>
<accession>B2R5W7</accession>
<accession>D3DWB1</accession>
<accession>Q8WVG5</accession>
<accession>Q9UEY9</accession>
<gene>
    <name type="primary">TSPAN7</name>
    <name type="synonym">A15</name>
    <name type="synonym">DXS1692E</name>
    <name type="synonym">MXS1</name>
    <name type="synonym">TM4SF2</name>
</gene>
<keyword id="KW-0225">Disease variant</keyword>
<keyword id="KW-0325">Glycoprotein</keyword>
<keyword id="KW-0945">Host-virus interaction</keyword>
<keyword id="KW-0991">Intellectual disability</keyword>
<keyword id="KW-0472">Membrane</keyword>
<keyword id="KW-1267">Proteomics identification</keyword>
<keyword id="KW-1185">Reference proteome</keyword>
<keyword id="KW-0812">Transmembrane</keyword>
<keyword id="KW-1133">Transmembrane helix</keyword>
<reference key="1">
    <citation type="journal article" date="1993" name="Immunogenetics">
        <title>Isolation of a novel cDNA clone showing marked similarity to ME491/CD63 superfamily.</title>
        <authorList>
            <person name="Emi N."/>
            <person name="Kitaori K."/>
            <person name="Seto M."/>
            <person name="Ueda R."/>
            <person name="Saito H."/>
            <person name="Takahashi T."/>
        </authorList>
    </citation>
    <scope>NUCLEOTIDE SEQUENCE [MRNA]</scope>
    <source>
        <tissue>Peripheral blood lymphocyte</tissue>
    </source>
</reference>
<reference key="2">
    <citation type="journal article" date="2004" name="Nat. Genet.">
        <title>Complete sequencing and characterization of 21,243 full-length human cDNAs.</title>
        <authorList>
            <person name="Ota T."/>
            <person name="Suzuki Y."/>
            <person name="Nishikawa T."/>
            <person name="Otsuki T."/>
            <person name="Sugiyama T."/>
            <person name="Irie R."/>
            <person name="Wakamatsu A."/>
            <person name="Hayashi K."/>
            <person name="Sato H."/>
            <person name="Nagai K."/>
            <person name="Kimura K."/>
            <person name="Makita H."/>
            <person name="Sekine M."/>
            <person name="Obayashi M."/>
            <person name="Nishi T."/>
            <person name="Shibahara T."/>
            <person name="Tanaka T."/>
            <person name="Ishii S."/>
            <person name="Yamamoto J."/>
            <person name="Saito K."/>
            <person name="Kawai Y."/>
            <person name="Isono Y."/>
            <person name="Nakamura Y."/>
            <person name="Nagahari K."/>
            <person name="Murakami K."/>
            <person name="Yasuda T."/>
            <person name="Iwayanagi T."/>
            <person name="Wagatsuma M."/>
            <person name="Shiratori A."/>
            <person name="Sudo H."/>
            <person name="Hosoiri T."/>
            <person name="Kaku Y."/>
            <person name="Kodaira H."/>
            <person name="Kondo H."/>
            <person name="Sugawara M."/>
            <person name="Takahashi M."/>
            <person name="Kanda K."/>
            <person name="Yokoi T."/>
            <person name="Furuya T."/>
            <person name="Kikkawa E."/>
            <person name="Omura Y."/>
            <person name="Abe K."/>
            <person name="Kamihara K."/>
            <person name="Katsuta N."/>
            <person name="Sato K."/>
            <person name="Tanikawa M."/>
            <person name="Yamazaki M."/>
            <person name="Ninomiya K."/>
            <person name="Ishibashi T."/>
            <person name="Yamashita H."/>
            <person name="Murakawa K."/>
            <person name="Fujimori K."/>
            <person name="Tanai H."/>
            <person name="Kimata M."/>
            <person name="Watanabe M."/>
            <person name="Hiraoka S."/>
            <person name="Chiba Y."/>
            <person name="Ishida S."/>
            <person name="Ono Y."/>
            <person name="Takiguchi S."/>
            <person name="Watanabe S."/>
            <person name="Yosida M."/>
            <person name="Hotuta T."/>
            <person name="Kusano J."/>
            <person name="Kanehori K."/>
            <person name="Takahashi-Fujii A."/>
            <person name="Hara H."/>
            <person name="Tanase T.-O."/>
            <person name="Nomura Y."/>
            <person name="Togiya S."/>
            <person name="Komai F."/>
            <person name="Hara R."/>
            <person name="Takeuchi K."/>
            <person name="Arita M."/>
            <person name="Imose N."/>
            <person name="Musashino K."/>
            <person name="Yuuki H."/>
            <person name="Oshima A."/>
            <person name="Sasaki N."/>
            <person name="Aotsuka S."/>
            <person name="Yoshikawa Y."/>
            <person name="Matsunawa H."/>
            <person name="Ichihara T."/>
            <person name="Shiohata N."/>
            <person name="Sano S."/>
            <person name="Moriya S."/>
            <person name="Momiyama H."/>
            <person name="Satoh N."/>
            <person name="Takami S."/>
            <person name="Terashima Y."/>
            <person name="Suzuki O."/>
            <person name="Nakagawa S."/>
            <person name="Senoh A."/>
            <person name="Mizoguchi H."/>
            <person name="Goto Y."/>
            <person name="Shimizu F."/>
            <person name="Wakebe H."/>
            <person name="Hishigaki H."/>
            <person name="Watanabe T."/>
            <person name="Sugiyama A."/>
            <person name="Takemoto M."/>
            <person name="Kawakami B."/>
            <person name="Yamazaki M."/>
            <person name="Watanabe K."/>
            <person name="Kumagai A."/>
            <person name="Itakura S."/>
            <person name="Fukuzumi Y."/>
            <person name="Fujimori Y."/>
            <person name="Komiyama M."/>
            <person name="Tashiro H."/>
            <person name="Tanigami A."/>
            <person name="Fujiwara T."/>
            <person name="Ono T."/>
            <person name="Yamada K."/>
            <person name="Fujii Y."/>
            <person name="Ozaki K."/>
            <person name="Hirao M."/>
            <person name="Ohmori Y."/>
            <person name="Kawabata A."/>
            <person name="Hikiji T."/>
            <person name="Kobatake N."/>
            <person name="Inagaki H."/>
            <person name="Ikema Y."/>
            <person name="Okamoto S."/>
            <person name="Okitani R."/>
            <person name="Kawakami T."/>
            <person name="Noguchi S."/>
            <person name="Itoh T."/>
            <person name="Shigeta K."/>
            <person name="Senba T."/>
            <person name="Matsumura K."/>
            <person name="Nakajima Y."/>
            <person name="Mizuno T."/>
            <person name="Morinaga M."/>
            <person name="Sasaki M."/>
            <person name="Togashi T."/>
            <person name="Oyama M."/>
            <person name="Hata H."/>
            <person name="Watanabe M."/>
            <person name="Komatsu T."/>
            <person name="Mizushima-Sugano J."/>
            <person name="Satoh T."/>
            <person name="Shirai Y."/>
            <person name="Takahashi Y."/>
            <person name="Nakagawa K."/>
            <person name="Okumura K."/>
            <person name="Nagase T."/>
            <person name="Nomura N."/>
            <person name="Kikuchi H."/>
            <person name="Masuho Y."/>
            <person name="Yamashita R."/>
            <person name="Nakai K."/>
            <person name="Yada T."/>
            <person name="Nakamura Y."/>
            <person name="Ohara O."/>
            <person name="Isogai T."/>
            <person name="Sugano S."/>
        </authorList>
    </citation>
    <scope>NUCLEOTIDE SEQUENCE [LARGE SCALE MRNA]</scope>
    <source>
        <tissue>Brain cortex</tissue>
    </source>
</reference>
<reference key="3">
    <citation type="submission" date="2005-09" db="EMBL/GenBank/DDBJ databases">
        <authorList>
            <person name="Mural R.J."/>
            <person name="Istrail S."/>
            <person name="Sutton G.G."/>
            <person name="Florea L."/>
            <person name="Halpern A.L."/>
            <person name="Mobarry C.M."/>
            <person name="Lippert R."/>
            <person name="Walenz B."/>
            <person name="Shatkay H."/>
            <person name="Dew I."/>
            <person name="Miller J.R."/>
            <person name="Flanigan M.J."/>
            <person name="Edwards N.J."/>
            <person name="Bolanos R."/>
            <person name="Fasulo D."/>
            <person name="Halldorsson B.V."/>
            <person name="Hannenhalli S."/>
            <person name="Turner R."/>
            <person name="Yooseph S."/>
            <person name="Lu F."/>
            <person name="Nusskern D.R."/>
            <person name="Shue B.C."/>
            <person name="Zheng X.H."/>
            <person name="Zhong F."/>
            <person name="Delcher A.L."/>
            <person name="Huson D.H."/>
            <person name="Kravitz S.A."/>
            <person name="Mouchard L."/>
            <person name="Reinert K."/>
            <person name="Remington K.A."/>
            <person name="Clark A.G."/>
            <person name="Waterman M.S."/>
            <person name="Eichler E.E."/>
            <person name="Adams M.D."/>
            <person name="Hunkapiller M.W."/>
            <person name="Myers E.W."/>
            <person name="Venter J.C."/>
        </authorList>
    </citation>
    <scope>NUCLEOTIDE SEQUENCE [LARGE SCALE GENOMIC DNA]</scope>
</reference>
<reference key="4">
    <citation type="journal article" date="1995" name="Int. J. Cancer">
        <title>Identification of a highly specific surface marker of T-cell acute lymphoblastic leukemia and neuroblastoma as a new member of the transmembrane 4 superfamily.</title>
        <authorList>
            <person name="Takagi S."/>
            <person name="Fujikawa K."/>
            <person name="Imai T."/>
            <person name="Fukuhara N."/>
            <person name="Fukudome K."/>
            <person name="Minegishi M."/>
            <person name="Tsuchiya S."/>
            <person name="Konno T."/>
            <person name="Hinuma Y."/>
            <person name="Yoshie O."/>
        </authorList>
    </citation>
    <scope>NUCLEOTIDE SEQUENCE [MRNA] OF 4-249</scope>
    <source>
        <tissue>Peripheral blood</tissue>
    </source>
</reference>
<reference key="5">
    <citation type="journal article" date="2000" name="Nat. Genet.">
        <title>A new gene involved in X-linked mental retardation identified by analysis of an X;2 balanced translocation.</title>
        <authorList>
            <person name="Zemni R."/>
            <person name="Bienvenu T."/>
            <person name="Vinet M.C."/>
            <person name="Sefiani A."/>
            <person name="Carrie A."/>
            <person name="Billuart P."/>
            <person name="McDonell N."/>
            <person name="Couvert P."/>
            <person name="Francis F."/>
            <person name="Chafey P."/>
            <person name="Fauchereau F."/>
            <person name="Friocourt G."/>
            <person name="desPortes V."/>
            <person name="Cardona A."/>
            <person name="Frints S."/>
            <person name="Meindl A."/>
            <person name="Brandau O."/>
            <person name="Ronce N."/>
            <person name="Moraine C."/>
            <person name="Bokhoven H.V."/>
            <person name="Ropers H.-H."/>
            <person name="Sudbrak R."/>
            <person name="Kahn A."/>
            <person name="Fryns J.-P."/>
            <person name="Beldjord C."/>
            <person name="Chelly J."/>
        </authorList>
    </citation>
    <scope>NUCLEOTIDE SEQUENCE [GENOMIC DNA]</scope>
    <scope>VARIANT XLID58 HIS-172</scope>
</reference>
<reference key="6">
    <citation type="submission" date="2001-05" db="EMBL/GenBank/DDBJ databases">
        <title>Homo sapiens transmembrane 4 superfamily member 2 (TM4SF2, tetraspanins), mRNA.</title>
        <authorList>
            <person name="Wang H."/>
            <person name="Gao X."/>
            <person name="Huang Y."/>
            <person name="Han J."/>
        </authorList>
    </citation>
    <scope>NUCLEOTIDE SEQUENCE [MRNA]</scope>
    <source>
        <tissue>Brain</tissue>
    </source>
</reference>
<reference key="7">
    <citation type="journal article" date="2004" name="Genome Res.">
        <title>The status, quality, and expansion of the NIH full-length cDNA project: the Mammalian Gene Collection (MGC).</title>
        <authorList>
            <consortium name="The MGC Project Team"/>
        </authorList>
    </citation>
    <scope>NUCLEOTIDE SEQUENCE [LARGE SCALE MRNA]</scope>
    <scope>VARIANTS LYS-53 AND THR-127</scope>
    <source>
        <tissue>Brain</tissue>
    </source>
</reference>
<reference key="8">
    <citation type="journal article" date="2010" name="Virol. J.">
        <title>Egress of HSV-1 capsid requires the interaction of VP26 and a cellular tetraspanin membrane protein.</title>
        <authorList>
            <person name="Wang L."/>
            <person name="Liu L."/>
            <person name="Che Y."/>
            <person name="Wang L."/>
            <person name="Jiang L."/>
            <person name="Dong C."/>
            <person name="Zhang Y."/>
            <person name="Li Q."/>
        </authorList>
    </citation>
    <scope>INTERACTION WITH HHV-1 UL35 (MICROBIAL INFECTION)</scope>
</reference>
<comment type="function">
    <text>May be involved in cell proliferation and cell motility.</text>
</comment>
<comment type="subunit">
    <text evidence="4">(Microbial infection) Interacts with herpes simplex virus 1 (HHV-1) UL35.</text>
</comment>
<comment type="interaction">
    <interactant intactId="EBI-1042779">
        <id>P41732</id>
    </interactant>
    <interactant intactId="EBI-18304435">
        <id>Q5JX71</id>
        <label>FAM209A</label>
    </interactant>
    <organismsDiffer>false</organismsDiffer>
    <experiments>3</experiments>
</comment>
<comment type="interaction">
    <interactant intactId="EBI-1042779">
        <id>P41732</id>
    </interactant>
    <interactant intactId="EBI-13345167">
        <id>Q8TDT2</id>
        <label>GPR152</label>
    </interactant>
    <organismsDiffer>false</organismsDiffer>
    <experiments>3</experiments>
</comment>
<comment type="interaction">
    <interactant intactId="EBI-1042779">
        <id>P41732</id>
    </interactant>
    <interactant intactId="EBI-2820517">
        <id>Q8TAF8</id>
        <label>LHFPL5</label>
    </interactant>
    <organismsDiffer>false</organismsDiffer>
    <experiments>3</experiments>
</comment>
<comment type="interaction">
    <interactant intactId="EBI-1042779">
        <id>P41732</id>
    </interactant>
    <interactant intactId="EBI-16439278">
        <id>Q6FHY5</id>
        <label>MEOX2</label>
    </interactant>
    <organismsDiffer>false</organismsDiffer>
    <experiments>3</experiments>
</comment>
<comment type="subcellular location">
    <subcellularLocation>
        <location>Membrane</location>
        <topology>Multi-pass membrane protein</topology>
    </subcellularLocation>
</comment>
<comment type="tissue specificity">
    <text>Not solely expressed in T-cells. Expressed in acute myelocytic leukemia cells of some patients.</text>
</comment>
<comment type="disease" evidence="2">
    <disease id="DI-00733">
        <name>Intellectual developmental disorder, X-linked 58</name>
        <acronym>XLID58</acronym>
        <description>A disorder characterized by significantly below average general intellectual functioning associated with impairments in adaptive behavior and manifested during the developmental period. Intellectual deficiency is the only primary symptom of non-syndromic X-linked intellectual disability, while syndromic intellectual disability presents with associated physical, neurological and/or psychiatric manifestations.</description>
        <dbReference type="MIM" id="300210"/>
    </disease>
    <text>The disease is caused by variants affecting the gene represented in this entry.</text>
</comment>
<comment type="similarity">
    <text evidence="5">Belongs to the tetraspanin (TM4SF) family.</text>
</comment>
<comment type="sequence caution" evidence="5">
    <conflict type="erroneous initiation">
        <sequence resource="EMBL-CDS" id="BAA01501"/>
    </conflict>
</comment>
<comment type="sequence caution" evidence="5">
    <conflict type="erroneous initiation">
        <sequence resource="EMBL-CDS" id="BAA06191"/>
    </conflict>
</comment>
<sequence>MASRRMETKPVITCLKTLLIIYSFVFWITGVILLAVGVWGKLTLGTYISLIAENSTNAPYVLIGTGTTIVVFGLFGCFATCRGSPWMLKLYAMFLSLVFLAELVAGISGFVFRHEIKDTFLRTYTDAMQTYNGNDERSRAVDHVQRSLSCCGVQNYTNWSTSPYFLEHGIPPSCCMNETDCNPQDLHNLTVAATKVNQKGCYDLVTSFMETNMGIIAGVAFGIAFSQLIGMLLACCLSRFITANQYEMV</sequence>
<organism>
    <name type="scientific">Homo sapiens</name>
    <name type="common">Human</name>
    <dbReference type="NCBI Taxonomy" id="9606"/>
    <lineage>
        <taxon>Eukaryota</taxon>
        <taxon>Metazoa</taxon>
        <taxon>Chordata</taxon>
        <taxon>Craniata</taxon>
        <taxon>Vertebrata</taxon>
        <taxon>Euteleostomi</taxon>
        <taxon>Mammalia</taxon>
        <taxon>Eutheria</taxon>
        <taxon>Euarchontoglires</taxon>
        <taxon>Primates</taxon>
        <taxon>Haplorrhini</taxon>
        <taxon>Catarrhini</taxon>
        <taxon>Hominidae</taxon>
        <taxon>Homo</taxon>
    </lineage>
</organism>